<feature type="chain" id="PRO_0000027647" description="Chymotrypsin B chain A">
    <location>
        <begin position="1"/>
        <end position="13"/>
    </location>
</feature>
<feature type="propeptide" id="PRO_0000027648" evidence="5">
    <location>
        <begin position="14"/>
        <end position="15"/>
    </location>
</feature>
<feature type="chain" id="PRO_0000027649" description="Chymotrypsin B chain B">
    <location>
        <begin position="16"/>
        <end position="245"/>
    </location>
</feature>
<feature type="domain" description="Peptidase S1" evidence="2">
    <location>
        <begin position="16"/>
        <end position="243"/>
    </location>
</feature>
<feature type="active site" description="Charge relay system" evidence="1">
    <location>
        <position position="57"/>
    </location>
</feature>
<feature type="active site" description="Charge relay system" evidence="1">
    <location>
        <position position="101"/>
    </location>
</feature>
<feature type="active site" description="Charge relay system" evidence="1">
    <location>
        <position position="195"/>
    </location>
</feature>
<feature type="disulfide bond" evidence="2">
    <location>
        <begin position="1"/>
        <end position="121"/>
    </location>
</feature>
<feature type="disulfide bond" evidence="2">
    <location>
        <begin position="42"/>
        <end position="58"/>
    </location>
</feature>
<feature type="disulfide bond" evidence="2">
    <location>
        <begin position="135"/>
        <end position="201"/>
    </location>
</feature>
<feature type="disulfide bond" evidence="2">
    <location>
        <begin position="167"/>
        <end position="182"/>
    </location>
</feature>
<feature type="disulfide bond" evidence="2">
    <location>
        <begin position="191"/>
        <end position="220"/>
    </location>
</feature>
<feature type="sequence conflict" description="In Ref. 2; AA sequence." evidence="6" ref="2">
    <original>QVT</original>
    <variation>VIS</variation>
    <location>
        <begin position="9"/>
        <end position="11"/>
    </location>
</feature>
<feature type="sequence conflict" description="In Ref. 2; AA sequence." evidence="6" ref="2">
    <original>S</original>
    <variation>T</variation>
    <location>
        <position position="26"/>
    </location>
</feature>
<feature type="sequence conflict" description="In Ref. 2; AA sequence." evidence="6" ref="2">
    <original>PW</original>
    <variation>Y</variation>
    <location>
        <begin position="28"/>
        <end position="29"/>
    </location>
</feature>
<reference key="1">
    <citation type="journal article" date="1996" name="Biochim. Biophys. Acta">
        <title>Structure of chymotrypsin variant B from Atlantic cod, Gadus morhua.</title>
        <authorList>
            <person name="Leth-Larsen R."/>
            <person name="Asgeirsson B."/>
            <person name="Thorolfsson M."/>
            <person name="Noerregaard-Madsen M."/>
            <person name="Hoejrup P."/>
        </authorList>
    </citation>
    <scope>PROTEIN SEQUENCE</scope>
    <source>
        <tissue>Pyloric caecum</tissue>
    </source>
</reference>
<reference key="2">
    <citation type="journal article" date="1991" name="Comp. Biochem. Physiol.">
        <title>Structural and kinetic properties of chymotrypsin from Atlantic cod (Gadus morhua). Comparison with bovine chymotrypsin.</title>
        <authorList>
            <person name="Asgeirsson B."/>
            <person name="Bjarnason J.B."/>
        </authorList>
    </citation>
    <scope>PROTEIN SEQUENCE OF 1-12 AND 16-31</scope>
    <source>
        <tissue>Pyloric caecum</tissue>
    </source>
</reference>
<sequence>CGSPAIQPQVTGYARIVNGEEAVPHSWPWQVSLQQSNGFHFCGGSLINENWVVTAAHCNVRTYHRVIVGEHDKASDENIQILKPSMVFTHPKWDSRTINNDISLIKLASPAVLGTNVSPVCLGESSDVFAPGMKCVTSGWGLTRYNAPGTPNKLQQAALPLMSNEECSQTWGNNMISDVMICAGAAGATSCMGDSGGPLVCQKDNVWTLVGIVSWGSSRCSVTTPAVYARVTELRGWVDQILAAN</sequence>
<comment type="catalytic activity">
    <reaction evidence="3 4">
        <text>Preferential cleavage: Tyr-|-Xaa, Trp-|-Xaa, Phe-|-Xaa, Leu-|-Xaa.</text>
        <dbReference type="EC" id="3.4.21.1"/>
    </reaction>
</comment>
<comment type="subcellular location">
    <subcellularLocation>
        <location>Secreted</location>
        <location>Extracellular space</location>
    </subcellularLocation>
</comment>
<comment type="similarity">
    <text evidence="2">Belongs to the peptidase S1 family.</text>
</comment>
<evidence type="ECO:0000250" key="1"/>
<evidence type="ECO:0000255" key="2">
    <source>
        <dbReference type="PROSITE-ProRule" id="PRU00274"/>
    </source>
</evidence>
<evidence type="ECO:0000255" key="3">
    <source>
        <dbReference type="PROSITE-ProRule" id="PRU10078"/>
    </source>
</evidence>
<evidence type="ECO:0000255" key="4">
    <source>
        <dbReference type="PROSITE-ProRule" id="PRU10079"/>
    </source>
</evidence>
<evidence type="ECO:0000269" key="5">
    <source>
    </source>
</evidence>
<evidence type="ECO:0000305" key="6"/>
<proteinExistence type="evidence at protein level"/>
<protein>
    <recommendedName>
        <fullName>Chymotrypsin B</fullName>
        <ecNumber>3.4.21.1</ecNumber>
    </recommendedName>
    <component>
        <recommendedName>
            <fullName>Chymotrypsin B chain A</fullName>
        </recommendedName>
    </component>
    <component>
        <recommendedName>
            <fullName>Chymotrypsin B chain B</fullName>
        </recommendedName>
    </component>
</protein>
<dbReference type="EC" id="3.4.21.1"/>
<dbReference type="SMR" id="P80646"/>
<dbReference type="STRING" id="8049.ENSGMOP00000010246"/>
<dbReference type="MEROPS" id="S01.437"/>
<dbReference type="HOGENOM" id="CLU_006842_7_6_1"/>
<dbReference type="TreeFam" id="TF330455"/>
<dbReference type="Proteomes" id="UP000694546">
    <property type="component" value="Unplaced"/>
</dbReference>
<dbReference type="GO" id="GO:0005576">
    <property type="term" value="C:extracellular region"/>
    <property type="evidence" value="ECO:0007669"/>
    <property type="project" value="UniProtKB-SubCell"/>
</dbReference>
<dbReference type="GO" id="GO:0004252">
    <property type="term" value="F:serine-type endopeptidase activity"/>
    <property type="evidence" value="ECO:0007669"/>
    <property type="project" value="UniProtKB-EC"/>
</dbReference>
<dbReference type="GO" id="GO:0007586">
    <property type="term" value="P:digestion"/>
    <property type="evidence" value="ECO:0007669"/>
    <property type="project" value="UniProtKB-KW"/>
</dbReference>
<dbReference type="GO" id="GO:0006508">
    <property type="term" value="P:proteolysis"/>
    <property type="evidence" value="ECO:0007669"/>
    <property type="project" value="UniProtKB-KW"/>
</dbReference>
<dbReference type="CDD" id="cd00190">
    <property type="entry name" value="Tryp_SPc"/>
    <property type="match status" value="1"/>
</dbReference>
<dbReference type="FunFam" id="2.40.10.10:FF:000176">
    <property type="entry name" value="Chymotrypsinogen A"/>
    <property type="match status" value="1"/>
</dbReference>
<dbReference type="FunFam" id="2.40.10.10:FF:000181">
    <property type="entry name" value="Chymotrypsinogen A"/>
    <property type="match status" value="1"/>
</dbReference>
<dbReference type="Gene3D" id="2.40.10.10">
    <property type="entry name" value="Trypsin-like serine proteases"/>
    <property type="match status" value="1"/>
</dbReference>
<dbReference type="InterPro" id="IPR009003">
    <property type="entry name" value="Peptidase_S1_PA"/>
</dbReference>
<dbReference type="InterPro" id="IPR043504">
    <property type="entry name" value="Peptidase_S1_PA_chymotrypsin"/>
</dbReference>
<dbReference type="InterPro" id="IPR001314">
    <property type="entry name" value="Peptidase_S1A"/>
</dbReference>
<dbReference type="InterPro" id="IPR001254">
    <property type="entry name" value="Trypsin_dom"/>
</dbReference>
<dbReference type="InterPro" id="IPR018114">
    <property type="entry name" value="TRYPSIN_HIS"/>
</dbReference>
<dbReference type="InterPro" id="IPR033116">
    <property type="entry name" value="TRYPSIN_SER"/>
</dbReference>
<dbReference type="PANTHER" id="PTHR24250">
    <property type="entry name" value="CHYMOTRYPSIN-RELATED"/>
    <property type="match status" value="1"/>
</dbReference>
<dbReference type="PANTHER" id="PTHR24250:SF54">
    <property type="entry name" value="CHYMOTRYPSINOGEN B2 PRECURSOR"/>
    <property type="match status" value="1"/>
</dbReference>
<dbReference type="Pfam" id="PF00089">
    <property type="entry name" value="Trypsin"/>
    <property type="match status" value="1"/>
</dbReference>
<dbReference type="PRINTS" id="PR00722">
    <property type="entry name" value="CHYMOTRYPSIN"/>
</dbReference>
<dbReference type="SMART" id="SM00020">
    <property type="entry name" value="Tryp_SPc"/>
    <property type="match status" value="1"/>
</dbReference>
<dbReference type="SUPFAM" id="SSF50494">
    <property type="entry name" value="Trypsin-like serine proteases"/>
    <property type="match status" value="1"/>
</dbReference>
<dbReference type="PROSITE" id="PS50240">
    <property type="entry name" value="TRYPSIN_DOM"/>
    <property type="match status" value="1"/>
</dbReference>
<dbReference type="PROSITE" id="PS00134">
    <property type="entry name" value="TRYPSIN_HIS"/>
    <property type="match status" value="1"/>
</dbReference>
<dbReference type="PROSITE" id="PS00135">
    <property type="entry name" value="TRYPSIN_SER"/>
    <property type="match status" value="1"/>
</dbReference>
<keyword id="KW-0222">Digestion</keyword>
<keyword id="KW-0903">Direct protein sequencing</keyword>
<keyword id="KW-1015">Disulfide bond</keyword>
<keyword id="KW-0378">Hydrolase</keyword>
<keyword id="KW-0645">Protease</keyword>
<keyword id="KW-1185">Reference proteome</keyword>
<keyword id="KW-0964">Secreted</keyword>
<keyword id="KW-0720">Serine protease</keyword>
<keyword id="KW-0865">Zymogen</keyword>
<organism>
    <name type="scientific">Gadus morhua</name>
    <name type="common">Atlantic cod</name>
    <dbReference type="NCBI Taxonomy" id="8049"/>
    <lineage>
        <taxon>Eukaryota</taxon>
        <taxon>Metazoa</taxon>
        <taxon>Chordata</taxon>
        <taxon>Craniata</taxon>
        <taxon>Vertebrata</taxon>
        <taxon>Euteleostomi</taxon>
        <taxon>Actinopterygii</taxon>
        <taxon>Neopterygii</taxon>
        <taxon>Teleostei</taxon>
        <taxon>Neoteleostei</taxon>
        <taxon>Acanthomorphata</taxon>
        <taxon>Zeiogadaria</taxon>
        <taxon>Gadariae</taxon>
        <taxon>Gadiformes</taxon>
        <taxon>Gadoidei</taxon>
        <taxon>Gadidae</taxon>
        <taxon>Gadus</taxon>
    </lineage>
</organism>
<name>CTRB_GADMO</name>
<accession>P80646</accession>